<feature type="chain" id="PRO_0000178899" description="UDP-N-acetylglucosamine 1-carboxyvinyltransferase">
    <location>
        <begin position="1"/>
        <end position="417"/>
    </location>
</feature>
<feature type="active site" description="Proton donor" evidence="1">
    <location>
        <position position="117"/>
    </location>
</feature>
<feature type="binding site" evidence="1">
    <location>
        <begin position="22"/>
        <end position="23"/>
    </location>
    <ligand>
        <name>phosphoenolpyruvate</name>
        <dbReference type="ChEBI" id="CHEBI:58702"/>
    </ligand>
</feature>
<feature type="binding site" evidence="1">
    <location>
        <position position="93"/>
    </location>
    <ligand>
        <name>UDP-N-acetyl-alpha-D-glucosamine</name>
        <dbReference type="ChEBI" id="CHEBI:57705"/>
    </ligand>
</feature>
<feature type="binding site" evidence="1">
    <location>
        <begin position="122"/>
        <end position="126"/>
    </location>
    <ligand>
        <name>UDP-N-acetyl-alpha-D-glucosamine</name>
        <dbReference type="ChEBI" id="CHEBI:57705"/>
    </ligand>
</feature>
<feature type="binding site" evidence="1">
    <location>
        <position position="304"/>
    </location>
    <ligand>
        <name>UDP-N-acetyl-alpha-D-glucosamine</name>
        <dbReference type="ChEBI" id="CHEBI:57705"/>
    </ligand>
</feature>
<feature type="binding site" evidence="1">
    <location>
        <position position="326"/>
    </location>
    <ligand>
        <name>UDP-N-acetyl-alpha-D-glucosamine</name>
        <dbReference type="ChEBI" id="CHEBI:57705"/>
    </ligand>
</feature>
<feature type="modified residue" description="2-(S-cysteinyl)pyruvic acid O-phosphothioketal" evidence="1">
    <location>
        <position position="117"/>
    </location>
</feature>
<name>MURA_NEIMB</name>
<dbReference type="EC" id="2.5.1.7" evidence="1"/>
<dbReference type="EMBL" id="AE002098">
    <property type="protein sequence ID" value="AAF40490.1"/>
    <property type="molecule type" value="Genomic_DNA"/>
</dbReference>
<dbReference type="PIR" id="A81248">
    <property type="entry name" value="A81248"/>
</dbReference>
<dbReference type="RefSeq" id="NP_273077.1">
    <property type="nucleotide sequence ID" value="NC_003112.2"/>
</dbReference>
<dbReference type="RefSeq" id="WP_002225755.1">
    <property type="nucleotide sequence ID" value="NC_003112.2"/>
</dbReference>
<dbReference type="SMR" id="Q9K1Q9"/>
<dbReference type="FunCoup" id="Q9K1Q9">
    <property type="interactions" value="427"/>
</dbReference>
<dbReference type="STRING" id="122586.NMB0011"/>
<dbReference type="PaxDb" id="122586-NMB0011"/>
<dbReference type="KEGG" id="nme:NMB0011"/>
<dbReference type="PATRIC" id="fig|122586.8.peg.12"/>
<dbReference type="HOGENOM" id="CLU_027387_0_0_4"/>
<dbReference type="InParanoid" id="Q9K1Q9"/>
<dbReference type="OrthoDB" id="9803760at2"/>
<dbReference type="UniPathway" id="UPA00219"/>
<dbReference type="Proteomes" id="UP000000425">
    <property type="component" value="Chromosome"/>
</dbReference>
<dbReference type="GO" id="GO:0005737">
    <property type="term" value="C:cytoplasm"/>
    <property type="evidence" value="ECO:0007669"/>
    <property type="project" value="UniProtKB-SubCell"/>
</dbReference>
<dbReference type="GO" id="GO:0008760">
    <property type="term" value="F:UDP-N-acetylglucosamine 1-carboxyvinyltransferase activity"/>
    <property type="evidence" value="ECO:0000318"/>
    <property type="project" value="GO_Central"/>
</dbReference>
<dbReference type="GO" id="GO:0051301">
    <property type="term" value="P:cell division"/>
    <property type="evidence" value="ECO:0007669"/>
    <property type="project" value="UniProtKB-KW"/>
</dbReference>
<dbReference type="GO" id="GO:0071555">
    <property type="term" value="P:cell wall organization"/>
    <property type="evidence" value="ECO:0007669"/>
    <property type="project" value="UniProtKB-KW"/>
</dbReference>
<dbReference type="GO" id="GO:0009252">
    <property type="term" value="P:peptidoglycan biosynthetic process"/>
    <property type="evidence" value="ECO:0000318"/>
    <property type="project" value="GO_Central"/>
</dbReference>
<dbReference type="GO" id="GO:0008360">
    <property type="term" value="P:regulation of cell shape"/>
    <property type="evidence" value="ECO:0007669"/>
    <property type="project" value="UniProtKB-KW"/>
</dbReference>
<dbReference type="GO" id="GO:0019277">
    <property type="term" value="P:UDP-N-acetylgalactosamine biosynthetic process"/>
    <property type="evidence" value="ECO:0007669"/>
    <property type="project" value="InterPro"/>
</dbReference>
<dbReference type="CDD" id="cd01555">
    <property type="entry name" value="UdpNAET"/>
    <property type="match status" value="1"/>
</dbReference>
<dbReference type="FunFam" id="3.65.10.10:FF:000002">
    <property type="entry name" value="UDP-N-acetylglucosamine 1-carboxyvinyltransferase"/>
    <property type="match status" value="1"/>
</dbReference>
<dbReference type="Gene3D" id="3.65.10.10">
    <property type="entry name" value="Enolpyruvate transferase domain"/>
    <property type="match status" value="2"/>
</dbReference>
<dbReference type="HAMAP" id="MF_00111">
    <property type="entry name" value="MurA"/>
    <property type="match status" value="1"/>
</dbReference>
<dbReference type="InterPro" id="IPR001986">
    <property type="entry name" value="Enolpyruvate_Tfrase_dom"/>
</dbReference>
<dbReference type="InterPro" id="IPR036968">
    <property type="entry name" value="Enolpyruvate_Tfrase_sf"/>
</dbReference>
<dbReference type="InterPro" id="IPR050068">
    <property type="entry name" value="MurA_subfamily"/>
</dbReference>
<dbReference type="InterPro" id="IPR013792">
    <property type="entry name" value="RNA3'P_cycl/enolpyr_Trfase_a/b"/>
</dbReference>
<dbReference type="InterPro" id="IPR005750">
    <property type="entry name" value="UDP_GlcNAc_COvinyl_MurA"/>
</dbReference>
<dbReference type="NCBIfam" id="TIGR01072">
    <property type="entry name" value="murA"/>
    <property type="match status" value="1"/>
</dbReference>
<dbReference type="NCBIfam" id="NF006873">
    <property type="entry name" value="PRK09369.1"/>
    <property type="match status" value="1"/>
</dbReference>
<dbReference type="PANTHER" id="PTHR43783">
    <property type="entry name" value="UDP-N-ACETYLGLUCOSAMINE 1-CARBOXYVINYLTRANSFERASE"/>
    <property type="match status" value="1"/>
</dbReference>
<dbReference type="PANTHER" id="PTHR43783:SF1">
    <property type="entry name" value="UDP-N-ACETYLGLUCOSAMINE 1-CARBOXYVINYLTRANSFERASE"/>
    <property type="match status" value="1"/>
</dbReference>
<dbReference type="Pfam" id="PF00275">
    <property type="entry name" value="EPSP_synthase"/>
    <property type="match status" value="1"/>
</dbReference>
<dbReference type="SUPFAM" id="SSF55205">
    <property type="entry name" value="EPT/RTPC-like"/>
    <property type="match status" value="1"/>
</dbReference>
<reference key="1">
    <citation type="journal article" date="2000" name="Science">
        <title>Complete genome sequence of Neisseria meningitidis serogroup B strain MC58.</title>
        <authorList>
            <person name="Tettelin H."/>
            <person name="Saunders N.J."/>
            <person name="Heidelberg J.F."/>
            <person name="Jeffries A.C."/>
            <person name="Nelson K.E."/>
            <person name="Eisen J.A."/>
            <person name="Ketchum K.A."/>
            <person name="Hood D.W."/>
            <person name="Peden J.F."/>
            <person name="Dodson R.J."/>
            <person name="Nelson W.C."/>
            <person name="Gwinn M.L."/>
            <person name="DeBoy R.T."/>
            <person name="Peterson J.D."/>
            <person name="Hickey E.K."/>
            <person name="Haft D.H."/>
            <person name="Salzberg S.L."/>
            <person name="White O."/>
            <person name="Fleischmann R.D."/>
            <person name="Dougherty B.A."/>
            <person name="Mason T.M."/>
            <person name="Ciecko A."/>
            <person name="Parksey D.S."/>
            <person name="Blair E."/>
            <person name="Cittone H."/>
            <person name="Clark E.B."/>
            <person name="Cotton M.D."/>
            <person name="Utterback T.R."/>
            <person name="Khouri H.M."/>
            <person name="Qin H."/>
            <person name="Vamathevan J.J."/>
            <person name="Gill J."/>
            <person name="Scarlato V."/>
            <person name="Masignani V."/>
            <person name="Pizza M."/>
            <person name="Grandi G."/>
            <person name="Sun L."/>
            <person name="Smith H.O."/>
            <person name="Fraser C.M."/>
            <person name="Moxon E.R."/>
            <person name="Rappuoli R."/>
            <person name="Venter J.C."/>
        </authorList>
    </citation>
    <scope>NUCLEOTIDE SEQUENCE [LARGE SCALE GENOMIC DNA]</scope>
    <source>
        <strain>ATCC BAA-335 / MC58</strain>
    </source>
</reference>
<keyword id="KW-0131">Cell cycle</keyword>
<keyword id="KW-0132">Cell division</keyword>
<keyword id="KW-0133">Cell shape</keyword>
<keyword id="KW-0961">Cell wall biogenesis/degradation</keyword>
<keyword id="KW-0963">Cytoplasm</keyword>
<keyword id="KW-0573">Peptidoglycan synthesis</keyword>
<keyword id="KW-0670">Pyruvate</keyword>
<keyword id="KW-1185">Reference proteome</keyword>
<keyword id="KW-0808">Transferase</keyword>
<accession>Q9K1Q9</accession>
<comment type="function">
    <text evidence="1">Cell wall formation. Adds enolpyruvyl to UDP-N-acetylglucosamine.</text>
</comment>
<comment type="catalytic activity">
    <reaction evidence="1">
        <text>phosphoenolpyruvate + UDP-N-acetyl-alpha-D-glucosamine = UDP-N-acetyl-3-O-(1-carboxyvinyl)-alpha-D-glucosamine + phosphate</text>
        <dbReference type="Rhea" id="RHEA:18681"/>
        <dbReference type="ChEBI" id="CHEBI:43474"/>
        <dbReference type="ChEBI" id="CHEBI:57705"/>
        <dbReference type="ChEBI" id="CHEBI:58702"/>
        <dbReference type="ChEBI" id="CHEBI:68483"/>
        <dbReference type="EC" id="2.5.1.7"/>
    </reaction>
</comment>
<comment type="pathway">
    <text evidence="1">Cell wall biogenesis; peptidoglycan biosynthesis.</text>
</comment>
<comment type="subcellular location">
    <subcellularLocation>
        <location evidence="1">Cytoplasm</location>
    </subcellularLocation>
</comment>
<comment type="similarity">
    <text evidence="1">Belongs to the EPSP synthase family. MurA subfamily.</text>
</comment>
<organism>
    <name type="scientific">Neisseria meningitidis serogroup B (strain ATCC BAA-335 / MC58)</name>
    <dbReference type="NCBI Taxonomy" id="122586"/>
    <lineage>
        <taxon>Bacteria</taxon>
        <taxon>Pseudomonadati</taxon>
        <taxon>Pseudomonadota</taxon>
        <taxon>Betaproteobacteria</taxon>
        <taxon>Neisseriales</taxon>
        <taxon>Neisseriaceae</taxon>
        <taxon>Neisseria</taxon>
    </lineage>
</organism>
<protein>
    <recommendedName>
        <fullName evidence="1">UDP-N-acetylglucosamine 1-carboxyvinyltransferase</fullName>
        <ecNumber evidence="1">2.5.1.7</ecNumber>
    </recommendedName>
    <alternativeName>
        <fullName evidence="1">Enoylpyruvate transferase</fullName>
    </alternativeName>
    <alternativeName>
        <fullName evidence="1">UDP-N-acetylglucosamine enolpyruvyl transferase</fullName>
        <shortName evidence="1">EPT</shortName>
    </alternativeName>
</protein>
<gene>
    <name evidence="1" type="primary">murA</name>
    <name type="ordered locus">NMB0011</name>
</gene>
<sequence length="417" mass="43945">MDKLKISANGPLNGEITVSGAKNAALPLMCAGLLTSGTLRLKNVPMLADVKTTQKLLQGMGARVLTDNISEFEINGGTVNNTCAPYELVRTMRASILVLGPTLARFGEAQVSLPGGCAIGSRPVDQHLKGLEAMGAEIVIEHGYVKAKGKLKGTRVAMDVVTVGGTENLLMAATLAEGTTVLENCAIEPEVVDLAECLVKMGAKISGIGTSTMIVEGVDELQGCEHSVVPDRIEAGTFLCAVAITGGRVVLRNAAPKTMEVVLDKLVEAGAVIEAGDDWIAIDMRQRPKAVDIRTVVHPGFPTDMQAQFMALNAVAEGSCRVVETIFENRFMHVPELNRMGANITTEGNTAFVQGVEQLSGAVVKATDLRASASLVIAGLAARGETVVEQIYHLDRGYENIEKKLGSVGAKIERVSG</sequence>
<evidence type="ECO:0000255" key="1">
    <source>
        <dbReference type="HAMAP-Rule" id="MF_00111"/>
    </source>
</evidence>
<proteinExistence type="inferred from homology"/>